<evidence type="ECO:0000255" key="1">
    <source>
        <dbReference type="HAMAP-Rule" id="MF_01333"/>
    </source>
</evidence>
<evidence type="ECO:0000305" key="2"/>
<comment type="function">
    <text evidence="1">This is one of the proteins that bind and probably mediate the attachment of the 5S RNA into the large ribosomal subunit, where it forms part of the central protuberance. In the 70S ribosome it contacts protein S13 of the 30S subunit (bridge B1b), connecting the 2 subunits; this bridge is implicated in subunit movement. Contacts the P site tRNA; the 5S rRNA and some of its associated proteins might help stabilize positioning of ribosome-bound tRNAs.</text>
</comment>
<comment type="subunit">
    <text evidence="1">Part of the 50S ribosomal subunit; part of the 5S rRNA/L5/L18/L25 subcomplex. Contacts the 5S rRNA and the P site tRNA. Forms a bridge to the 30S subunit in the 70S ribosome.</text>
</comment>
<comment type="similarity">
    <text evidence="1">Belongs to the universal ribosomal protein uL5 family.</text>
</comment>
<sequence length="180" mass="20298">MARLKDRYRQEVAPALKERFGIDNPMRVPTLEKIVVNMGVGEAAQDSRKLDGAMEDLARITGQKPQVRRARKSIAGFKIREGMPVGARVTLRGERMWEFLDRLISVALPRVRDFRGVSPDSFDGRGNYALGVREQLIFPEISYDAVDSVRGLDIAIVTTAETDEEARELLRLLGMPFRPN</sequence>
<reference key="1">
    <citation type="submission" date="2006-06" db="EMBL/GenBank/DDBJ databases">
        <title>Complete sequence of Rubrobacter xylanophilus DSM 9941.</title>
        <authorList>
            <consortium name="US DOE Joint Genome Institute"/>
            <person name="Copeland A."/>
            <person name="Lucas S."/>
            <person name="Lapidus A."/>
            <person name="Barry K."/>
            <person name="Detter J.C."/>
            <person name="Glavina del Rio T."/>
            <person name="Hammon N."/>
            <person name="Israni S."/>
            <person name="Dalin E."/>
            <person name="Tice H."/>
            <person name="Pitluck S."/>
            <person name="Munk A.C."/>
            <person name="Brettin T."/>
            <person name="Bruce D."/>
            <person name="Han C."/>
            <person name="Tapia R."/>
            <person name="Gilna P."/>
            <person name="Schmutz J."/>
            <person name="Larimer F."/>
            <person name="Land M."/>
            <person name="Hauser L."/>
            <person name="Kyrpides N."/>
            <person name="Lykidis A."/>
            <person name="da Costa M.S."/>
            <person name="Rainey F.A."/>
            <person name="Empadinhas N."/>
            <person name="Jolivet E."/>
            <person name="Battista J.R."/>
            <person name="Richardson P."/>
        </authorList>
    </citation>
    <scope>NUCLEOTIDE SEQUENCE [LARGE SCALE GENOMIC DNA]</scope>
    <source>
        <strain>DSM 9941 / JCM 11954 / NBRC 16129 / PRD-1</strain>
    </source>
</reference>
<accession>Q1AU41</accession>
<proteinExistence type="inferred from homology"/>
<feature type="chain" id="PRO_1000073291" description="Large ribosomal subunit protein uL5">
    <location>
        <begin position="1"/>
        <end position="180"/>
    </location>
</feature>
<gene>
    <name evidence="1" type="primary">rplE</name>
    <name type="ordered locus">Rxyl_2143</name>
</gene>
<protein>
    <recommendedName>
        <fullName evidence="1">Large ribosomal subunit protein uL5</fullName>
    </recommendedName>
    <alternativeName>
        <fullName evidence="2">50S ribosomal protein L5</fullName>
    </alternativeName>
</protein>
<name>RL5_RUBXD</name>
<dbReference type="EMBL" id="CP000386">
    <property type="protein sequence ID" value="ABG05087.1"/>
    <property type="molecule type" value="Genomic_DNA"/>
</dbReference>
<dbReference type="RefSeq" id="WP_011565102.1">
    <property type="nucleotide sequence ID" value="NC_008148.1"/>
</dbReference>
<dbReference type="SMR" id="Q1AU41"/>
<dbReference type="STRING" id="266117.Rxyl_2143"/>
<dbReference type="KEGG" id="rxy:Rxyl_2143"/>
<dbReference type="eggNOG" id="COG0094">
    <property type="taxonomic scope" value="Bacteria"/>
</dbReference>
<dbReference type="HOGENOM" id="CLU_061015_2_1_11"/>
<dbReference type="OrthoDB" id="9806626at2"/>
<dbReference type="PhylomeDB" id="Q1AU41"/>
<dbReference type="Proteomes" id="UP000006637">
    <property type="component" value="Chromosome"/>
</dbReference>
<dbReference type="GO" id="GO:1990904">
    <property type="term" value="C:ribonucleoprotein complex"/>
    <property type="evidence" value="ECO:0007669"/>
    <property type="project" value="UniProtKB-KW"/>
</dbReference>
<dbReference type="GO" id="GO:0005840">
    <property type="term" value="C:ribosome"/>
    <property type="evidence" value="ECO:0007669"/>
    <property type="project" value="UniProtKB-KW"/>
</dbReference>
<dbReference type="GO" id="GO:0019843">
    <property type="term" value="F:rRNA binding"/>
    <property type="evidence" value="ECO:0007669"/>
    <property type="project" value="UniProtKB-UniRule"/>
</dbReference>
<dbReference type="GO" id="GO:0003735">
    <property type="term" value="F:structural constituent of ribosome"/>
    <property type="evidence" value="ECO:0007669"/>
    <property type="project" value="InterPro"/>
</dbReference>
<dbReference type="GO" id="GO:0000049">
    <property type="term" value="F:tRNA binding"/>
    <property type="evidence" value="ECO:0007669"/>
    <property type="project" value="UniProtKB-UniRule"/>
</dbReference>
<dbReference type="GO" id="GO:0006412">
    <property type="term" value="P:translation"/>
    <property type="evidence" value="ECO:0007669"/>
    <property type="project" value="UniProtKB-UniRule"/>
</dbReference>
<dbReference type="FunFam" id="3.30.1440.10:FF:000001">
    <property type="entry name" value="50S ribosomal protein L5"/>
    <property type="match status" value="1"/>
</dbReference>
<dbReference type="Gene3D" id="3.30.1440.10">
    <property type="match status" value="1"/>
</dbReference>
<dbReference type="HAMAP" id="MF_01333_B">
    <property type="entry name" value="Ribosomal_uL5_B"/>
    <property type="match status" value="1"/>
</dbReference>
<dbReference type="InterPro" id="IPR002132">
    <property type="entry name" value="Ribosomal_uL5"/>
</dbReference>
<dbReference type="InterPro" id="IPR020930">
    <property type="entry name" value="Ribosomal_uL5_bac-type"/>
</dbReference>
<dbReference type="InterPro" id="IPR031309">
    <property type="entry name" value="Ribosomal_uL5_C"/>
</dbReference>
<dbReference type="InterPro" id="IPR022803">
    <property type="entry name" value="Ribosomal_uL5_dom_sf"/>
</dbReference>
<dbReference type="InterPro" id="IPR031310">
    <property type="entry name" value="Ribosomal_uL5_N"/>
</dbReference>
<dbReference type="NCBIfam" id="NF000585">
    <property type="entry name" value="PRK00010.1"/>
    <property type="match status" value="1"/>
</dbReference>
<dbReference type="PANTHER" id="PTHR11994">
    <property type="entry name" value="60S RIBOSOMAL PROTEIN L11-RELATED"/>
    <property type="match status" value="1"/>
</dbReference>
<dbReference type="Pfam" id="PF00281">
    <property type="entry name" value="Ribosomal_L5"/>
    <property type="match status" value="1"/>
</dbReference>
<dbReference type="Pfam" id="PF00673">
    <property type="entry name" value="Ribosomal_L5_C"/>
    <property type="match status" value="1"/>
</dbReference>
<dbReference type="PIRSF" id="PIRSF002161">
    <property type="entry name" value="Ribosomal_L5"/>
    <property type="match status" value="1"/>
</dbReference>
<dbReference type="SUPFAM" id="SSF55282">
    <property type="entry name" value="RL5-like"/>
    <property type="match status" value="1"/>
</dbReference>
<organism>
    <name type="scientific">Rubrobacter xylanophilus (strain DSM 9941 / JCM 11954 / NBRC 16129 / PRD-1)</name>
    <dbReference type="NCBI Taxonomy" id="266117"/>
    <lineage>
        <taxon>Bacteria</taxon>
        <taxon>Bacillati</taxon>
        <taxon>Actinomycetota</taxon>
        <taxon>Rubrobacteria</taxon>
        <taxon>Rubrobacterales</taxon>
        <taxon>Rubrobacteraceae</taxon>
        <taxon>Rubrobacter</taxon>
    </lineage>
</organism>
<keyword id="KW-1185">Reference proteome</keyword>
<keyword id="KW-0687">Ribonucleoprotein</keyword>
<keyword id="KW-0689">Ribosomal protein</keyword>
<keyword id="KW-0694">RNA-binding</keyword>
<keyword id="KW-0699">rRNA-binding</keyword>
<keyword id="KW-0820">tRNA-binding</keyword>